<gene>
    <name evidence="1" type="primary">luxS</name>
    <name type="ordered locus">Exig_2345</name>
</gene>
<reference key="1">
    <citation type="submission" date="2008-04" db="EMBL/GenBank/DDBJ databases">
        <title>Complete sequence of chromosome of Exiguobacterium sibiricum 255-15.</title>
        <authorList>
            <consortium name="US DOE Joint Genome Institute"/>
            <person name="Copeland A."/>
            <person name="Lucas S."/>
            <person name="Lapidus A."/>
            <person name="Glavina del Rio T."/>
            <person name="Dalin E."/>
            <person name="Tice H."/>
            <person name="Bruce D."/>
            <person name="Goodwin L."/>
            <person name="Pitluck S."/>
            <person name="Kiss H."/>
            <person name="Chertkov O."/>
            <person name="Monk C."/>
            <person name="Brettin T."/>
            <person name="Detter J.C."/>
            <person name="Han C."/>
            <person name="Kuske C.R."/>
            <person name="Schmutz J."/>
            <person name="Larimer F."/>
            <person name="Land M."/>
            <person name="Hauser L."/>
            <person name="Kyrpides N."/>
            <person name="Mikhailova N."/>
            <person name="Vishnivetskaya T."/>
            <person name="Rodrigues D.F."/>
            <person name="Gilichinsky D."/>
            <person name="Tiedje J."/>
            <person name="Richardson P."/>
        </authorList>
    </citation>
    <scope>NUCLEOTIDE SEQUENCE [LARGE SCALE GENOMIC DNA]</scope>
    <source>
        <strain>DSM 17290 / CCUG 55495 / CIP 109462 / JCM 13490 / 255-15</strain>
    </source>
</reference>
<proteinExistence type="inferred from homology"/>
<name>LUXS_EXIS2</name>
<evidence type="ECO:0000255" key="1">
    <source>
        <dbReference type="HAMAP-Rule" id="MF_00091"/>
    </source>
</evidence>
<protein>
    <recommendedName>
        <fullName evidence="1">S-ribosylhomocysteine lyase</fullName>
        <ecNumber evidence="1">4.4.1.21</ecNumber>
    </recommendedName>
    <alternativeName>
        <fullName evidence="1">AI-2 synthesis protein</fullName>
    </alternativeName>
    <alternativeName>
        <fullName evidence="1">Autoinducer-2 production protein LuxS</fullName>
    </alternativeName>
</protein>
<organism>
    <name type="scientific">Exiguobacterium sibiricum (strain DSM 17290 / CCUG 55495 / CIP 109462 / JCM 13490 / 255-15)</name>
    <dbReference type="NCBI Taxonomy" id="262543"/>
    <lineage>
        <taxon>Bacteria</taxon>
        <taxon>Bacillati</taxon>
        <taxon>Bacillota</taxon>
        <taxon>Bacilli</taxon>
        <taxon>Bacillales</taxon>
        <taxon>Bacillales Family XII. Incertae Sedis</taxon>
        <taxon>Exiguobacterium</taxon>
    </lineage>
</organism>
<keyword id="KW-0071">Autoinducer synthesis</keyword>
<keyword id="KW-0408">Iron</keyword>
<keyword id="KW-0456">Lyase</keyword>
<keyword id="KW-0479">Metal-binding</keyword>
<keyword id="KW-0673">Quorum sensing</keyword>
<keyword id="KW-1185">Reference proteome</keyword>
<feature type="chain" id="PRO_1000093307" description="S-ribosylhomocysteine lyase">
    <location>
        <begin position="1"/>
        <end position="154"/>
    </location>
</feature>
<feature type="binding site" evidence="1">
    <location>
        <position position="57"/>
    </location>
    <ligand>
        <name>Fe cation</name>
        <dbReference type="ChEBI" id="CHEBI:24875"/>
    </ligand>
</feature>
<feature type="binding site" evidence="1">
    <location>
        <position position="61"/>
    </location>
    <ligand>
        <name>Fe cation</name>
        <dbReference type="ChEBI" id="CHEBI:24875"/>
    </ligand>
</feature>
<feature type="binding site" evidence="1">
    <location>
        <position position="124"/>
    </location>
    <ligand>
        <name>Fe cation</name>
        <dbReference type="ChEBI" id="CHEBI:24875"/>
    </ligand>
</feature>
<sequence>MTIKKMNVESFNLDHTKVKAPYIRVAGYKDGKVDQVVKYDIRFTQPNVEQMPMRAMHTLEHLLAENIRNYSDDVIDVSPMGCQTGFYMAMMNFDSVEKMSELVEKTLKDVLAAEEIPAQNEVQCGFASAHDLKGAKHYAEKMLAGRDEWDIVFG</sequence>
<dbReference type="EC" id="4.4.1.21" evidence="1"/>
<dbReference type="EMBL" id="CP001022">
    <property type="protein sequence ID" value="ACB61795.1"/>
    <property type="molecule type" value="Genomic_DNA"/>
</dbReference>
<dbReference type="RefSeq" id="WP_012371211.1">
    <property type="nucleotide sequence ID" value="NC_010556.1"/>
</dbReference>
<dbReference type="SMR" id="B1YKZ3"/>
<dbReference type="STRING" id="262543.Exig_2345"/>
<dbReference type="KEGG" id="esi:Exig_2345"/>
<dbReference type="eggNOG" id="COG1854">
    <property type="taxonomic scope" value="Bacteria"/>
</dbReference>
<dbReference type="HOGENOM" id="CLU_107531_0_0_9"/>
<dbReference type="OrthoDB" id="9788129at2"/>
<dbReference type="Proteomes" id="UP000001681">
    <property type="component" value="Chromosome"/>
</dbReference>
<dbReference type="GO" id="GO:0005506">
    <property type="term" value="F:iron ion binding"/>
    <property type="evidence" value="ECO:0007669"/>
    <property type="project" value="InterPro"/>
</dbReference>
<dbReference type="GO" id="GO:0043768">
    <property type="term" value="F:S-ribosylhomocysteine lyase activity"/>
    <property type="evidence" value="ECO:0007669"/>
    <property type="project" value="UniProtKB-UniRule"/>
</dbReference>
<dbReference type="GO" id="GO:0009372">
    <property type="term" value="P:quorum sensing"/>
    <property type="evidence" value="ECO:0007669"/>
    <property type="project" value="UniProtKB-UniRule"/>
</dbReference>
<dbReference type="Gene3D" id="3.30.1360.80">
    <property type="entry name" value="S-ribosylhomocysteinase (LuxS)"/>
    <property type="match status" value="1"/>
</dbReference>
<dbReference type="HAMAP" id="MF_00091">
    <property type="entry name" value="LuxS"/>
    <property type="match status" value="1"/>
</dbReference>
<dbReference type="InterPro" id="IPR037005">
    <property type="entry name" value="LuxS_sf"/>
</dbReference>
<dbReference type="InterPro" id="IPR011249">
    <property type="entry name" value="Metalloenz_LuxS/M16"/>
</dbReference>
<dbReference type="InterPro" id="IPR003815">
    <property type="entry name" value="S-ribosylhomocysteinase"/>
</dbReference>
<dbReference type="NCBIfam" id="NF002604">
    <property type="entry name" value="PRK02260.1-4"/>
    <property type="match status" value="1"/>
</dbReference>
<dbReference type="PANTHER" id="PTHR35799">
    <property type="entry name" value="S-RIBOSYLHOMOCYSTEINE LYASE"/>
    <property type="match status" value="1"/>
</dbReference>
<dbReference type="PANTHER" id="PTHR35799:SF1">
    <property type="entry name" value="S-RIBOSYLHOMOCYSTEINE LYASE"/>
    <property type="match status" value="1"/>
</dbReference>
<dbReference type="Pfam" id="PF02664">
    <property type="entry name" value="LuxS"/>
    <property type="match status" value="1"/>
</dbReference>
<dbReference type="PIRSF" id="PIRSF006160">
    <property type="entry name" value="AI2"/>
    <property type="match status" value="1"/>
</dbReference>
<dbReference type="PRINTS" id="PR01487">
    <property type="entry name" value="LUXSPROTEIN"/>
</dbReference>
<dbReference type="SUPFAM" id="SSF63411">
    <property type="entry name" value="LuxS/MPP-like metallohydrolase"/>
    <property type="match status" value="1"/>
</dbReference>
<comment type="function">
    <text evidence="1">Involved in the synthesis of autoinducer 2 (AI-2) which is secreted by bacteria and is used to communicate both the cell density and the metabolic potential of the environment. The regulation of gene expression in response to changes in cell density is called quorum sensing. Catalyzes the transformation of S-ribosylhomocysteine (RHC) to homocysteine (HC) and 4,5-dihydroxy-2,3-pentadione (DPD).</text>
</comment>
<comment type="catalytic activity">
    <reaction evidence="1">
        <text>S-(5-deoxy-D-ribos-5-yl)-L-homocysteine = (S)-4,5-dihydroxypentane-2,3-dione + L-homocysteine</text>
        <dbReference type="Rhea" id="RHEA:17753"/>
        <dbReference type="ChEBI" id="CHEBI:29484"/>
        <dbReference type="ChEBI" id="CHEBI:58195"/>
        <dbReference type="ChEBI" id="CHEBI:58199"/>
        <dbReference type="EC" id="4.4.1.21"/>
    </reaction>
</comment>
<comment type="cofactor">
    <cofactor evidence="1">
        <name>Fe cation</name>
        <dbReference type="ChEBI" id="CHEBI:24875"/>
    </cofactor>
    <text evidence="1">Binds 1 Fe cation per subunit.</text>
</comment>
<comment type="subunit">
    <text evidence="1">Homodimer.</text>
</comment>
<comment type="similarity">
    <text evidence="1">Belongs to the LuxS family.</text>
</comment>
<accession>B1YKZ3</accession>